<sequence>MGDQNGNTSFAPDLNPPQDHVSLLPLNYSYGDYDIPLDDDEDVTKTQTFFAAKIVIGVALAGIMLVCGVGNFVFIAALARYKKLRNLTNLLIANLAISDFLVAIVCCPFEMDYYVVRQLSWEHGHVLCASVNYLRTVSLYVSTNALLAIAIDRYLAIVHPLKRMNYQTASFLIALVWMVSILIAIPSAYFTTETILVIVKNQEKLFCGQIWPVDQQLYYKSYFLFVFGLEFVGPVVTMTLCYARISQELWFKAVPGFQTEQIRKRLRCRRKTVLLLMGILTAYVLCWAPFYGFTIVRDFFPTLVVKEKHYLTAFYVVECIAMSNSMINTICFVTVKNNTMKYFKKMLLLHWRPSHYGSKSSADLDLKTSGVPATEEVDCIRLK</sequence>
<comment type="function">
    <text evidence="1">Receptor for prokineticin 2. Exclusively coupled to the G(q) subclass of heteromeric G proteins. Activation leads to mobilization of calcium, stimulation of phosphoinositide turnover and activation of p44/p42 mitogen-activated protein kinase (By similarity).</text>
</comment>
<comment type="subunit">
    <text evidence="1">Homodimer.</text>
</comment>
<comment type="subcellular location">
    <subcellularLocation>
        <location evidence="2">Cell membrane</location>
        <topology>Multi-pass membrane protein</topology>
    </subcellularLocation>
</comment>
<comment type="tissue specificity">
    <text>Abundantly expressed in the CNS and reproductive organs with the highest levels in the cerebrum, cerebellum, testis and ovary.</text>
</comment>
<comment type="similarity">
    <text evidence="4">Belongs to the G-protein coupled receptor 1 family.</text>
</comment>
<comment type="sequence caution" evidence="5">
    <conflict type="erroneous initiation">
        <sequence resource="EMBL-CDS" id="AAM11891"/>
    </conflict>
</comment>
<keyword id="KW-1003">Cell membrane</keyword>
<keyword id="KW-1015">Disulfide bond</keyword>
<keyword id="KW-0297">G-protein coupled receptor</keyword>
<keyword id="KW-0325">Glycoprotein</keyword>
<keyword id="KW-0472">Membrane</keyword>
<keyword id="KW-0675">Receptor</keyword>
<keyword id="KW-1185">Reference proteome</keyword>
<keyword id="KW-0807">Transducer</keyword>
<keyword id="KW-0812">Transmembrane</keyword>
<keyword id="KW-1133">Transmembrane helix</keyword>
<evidence type="ECO:0000250" key="1"/>
<evidence type="ECO:0000250" key="2">
    <source>
        <dbReference type="UniProtKB" id="Q8NFJ6"/>
    </source>
</evidence>
<evidence type="ECO:0000255" key="3"/>
<evidence type="ECO:0000255" key="4">
    <source>
        <dbReference type="PROSITE-ProRule" id="PRU00521"/>
    </source>
</evidence>
<evidence type="ECO:0000305" key="5"/>
<dbReference type="EMBL" id="AY089975">
    <property type="protein sequence ID" value="AAM11891.1"/>
    <property type="status" value="ALT_INIT"/>
    <property type="molecule type" value="mRNA"/>
</dbReference>
<dbReference type="RefSeq" id="NP_620434.1">
    <property type="nucleotide sequence ID" value="NM_138978.1"/>
</dbReference>
<dbReference type="SMR" id="Q8R415"/>
<dbReference type="FunCoup" id="Q8R415">
    <property type="interactions" value="133"/>
</dbReference>
<dbReference type="STRING" id="10116.ENSRNOP00000028889"/>
<dbReference type="GlyCosmos" id="Q8R415">
    <property type="glycosylation" value="2 sites, No reported glycans"/>
</dbReference>
<dbReference type="GlyGen" id="Q8R415">
    <property type="glycosylation" value="2 sites"/>
</dbReference>
<dbReference type="PhosphoSitePlus" id="Q8R415"/>
<dbReference type="PaxDb" id="10116-ENSRNOP00000028889"/>
<dbReference type="GeneID" id="192649"/>
<dbReference type="KEGG" id="rno:192649"/>
<dbReference type="UCSC" id="RGD:708445">
    <property type="organism name" value="rat"/>
</dbReference>
<dbReference type="AGR" id="RGD:708445"/>
<dbReference type="CTD" id="128674"/>
<dbReference type="RGD" id="708445">
    <property type="gene designation" value="Prokr2"/>
</dbReference>
<dbReference type="eggNOG" id="KOG3656">
    <property type="taxonomic scope" value="Eukaryota"/>
</dbReference>
<dbReference type="InParanoid" id="Q8R415"/>
<dbReference type="PhylomeDB" id="Q8R415"/>
<dbReference type="Reactome" id="R-RNO-375276">
    <property type="pathway name" value="Peptide ligand-binding receptors"/>
</dbReference>
<dbReference type="Reactome" id="R-RNO-416476">
    <property type="pathway name" value="G alpha (q) signalling events"/>
</dbReference>
<dbReference type="PRO" id="PR:Q8R415"/>
<dbReference type="Proteomes" id="UP000002494">
    <property type="component" value="Unplaced"/>
</dbReference>
<dbReference type="GO" id="GO:0005886">
    <property type="term" value="C:plasma membrane"/>
    <property type="evidence" value="ECO:0000250"/>
    <property type="project" value="UniProtKB"/>
</dbReference>
<dbReference type="GO" id="GO:0004930">
    <property type="term" value="F:G protein-coupled receptor activity"/>
    <property type="evidence" value="ECO:0000315"/>
    <property type="project" value="RGD"/>
</dbReference>
<dbReference type="GO" id="GO:0004983">
    <property type="term" value="F:neuropeptide Y receptor activity"/>
    <property type="evidence" value="ECO:0007669"/>
    <property type="project" value="InterPro"/>
</dbReference>
<dbReference type="GO" id="GO:0032870">
    <property type="term" value="P:cellular response to hormone stimulus"/>
    <property type="evidence" value="ECO:0000318"/>
    <property type="project" value="GO_Central"/>
</dbReference>
<dbReference type="GO" id="GO:0007623">
    <property type="term" value="P:circadian rhythm"/>
    <property type="evidence" value="ECO:0000266"/>
    <property type="project" value="RGD"/>
</dbReference>
<dbReference type="GO" id="GO:0007186">
    <property type="term" value="P:G protein-coupled receptor signaling pathway"/>
    <property type="evidence" value="ECO:0000318"/>
    <property type="project" value="GO_Central"/>
</dbReference>
<dbReference type="CDD" id="cd15204">
    <property type="entry name" value="7tmA_prokineticin-R"/>
    <property type="match status" value="1"/>
</dbReference>
<dbReference type="FunFam" id="1.20.1070.10:FF:000069">
    <property type="entry name" value="Prokineticin receptor 2"/>
    <property type="match status" value="1"/>
</dbReference>
<dbReference type="Gene3D" id="1.20.1070.10">
    <property type="entry name" value="Rhodopsin 7-helix transmembrane proteins"/>
    <property type="match status" value="1"/>
</dbReference>
<dbReference type="InterPro" id="IPR000276">
    <property type="entry name" value="GPCR_Rhodpsn"/>
</dbReference>
<dbReference type="InterPro" id="IPR017452">
    <property type="entry name" value="GPCR_Rhodpsn_7TM"/>
</dbReference>
<dbReference type="InterPro" id="IPR000611">
    <property type="entry name" value="NPY_rcpt"/>
</dbReference>
<dbReference type="PANTHER" id="PTHR24238">
    <property type="entry name" value="G-PROTEIN COUPLED RECEPTOR"/>
    <property type="match status" value="1"/>
</dbReference>
<dbReference type="PANTHER" id="PTHR24238:SF74">
    <property type="entry name" value="PROKINETICIN RECEPTOR 2"/>
    <property type="match status" value="1"/>
</dbReference>
<dbReference type="Pfam" id="PF00001">
    <property type="entry name" value="7tm_1"/>
    <property type="match status" value="1"/>
</dbReference>
<dbReference type="PRINTS" id="PR00237">
    <property type="entry name" value="GPCRRHODOPSN"/>
</dbReference>
<dbReference type="PRINTS" id="PR01012">
    <property type="entry name" value="NRPEPTIDEYR"/>
</dbReference>
<dbReference type="SUPFAM" id="SSF81321">
    <property type="entry name" value="Family A G protein-coupled receptor-like"/>
    <property type="match status" value="1"/>
</dbReference>
<dbReference type="PROSITE" id="PS00237">
    <property type="entry name" value="G_PROTEIN_RECEP_F1_1"/>
    <property type="match status" value="1"/>
</dbReference>
<dbReference type="PROSITE" id="PS50262">
    <property type="entry name" value="G_PROTEIN_RECEP_F1_2"/>
    <property type="match status" value="1"/>
</dbReference>
<reference key="1">
    <citation type="journal article" date="2002" name="Biochem. Biophys. Res. Commun.">
        <title>Isolation and identification of EG-VEGF/prokineticins as cognate ligands for two orphan G-protein-coupled receptors.</title>
        <authorList>
            <person name="Masuda Y."/>
            <person name="Takatsu Y."/>
            <person name="Terao Y."/>
            <person name="Kumano S."/>
            <person name="Ishibashi Y."/>
            <person name="Suenaga M."/>
            <person name="Abe M."/>
            <person name="Fukusumi S."/>
            <person name="Watanabe T."/>
            <person name="Shintani Y."/>
            <person name="Yamada T."/>
            <person name="Hinuma S."/>
            <person name="Inatomi N."/>
            <person name="Ohtaki T."/>
            <person name="Onda H."/>
            <person name="Fujino M."/>
        </authorList>
    </citation>
    <scope>NUCLEOTIDE SEQUENCE [MRNA]</scope>
    <source>
        <strain>Sprague-Dawley</strain>
    </source>
</reference>
<accession>Q8R415</accession>
<name>PKR2_RAT</name>
<organism>
    <name type="scientific">Rattus norvegicus</name>
    <name type="common">Rat</name>
    <dbReference type="NCBI Taxonomy" id="10116"/>
    <lineage>
        <taxon>Eukaryota</taxon>
        <taxon>Metazoa</taxon>
        <taxon>Chordata</taxon>
        <taxon>Craniata</taxon>
        <taxon>Vertebrata</taxon>
        <taxon>Euteleostomi</taxon>
        <taxon>Mammalia</taxon>
        <taxon>Eutheria</taxon>
        <taxon>Euarchontoglires</taxon>
        <taxon>Glires</taxon>
        <taxon>Rodentia</taxon>
        <taxon>Myomorpha</taxon>
        <taxon>Muroidea</taxon>
        <taxon>Muridae</taxon>
        <taxon>Murinae</taxon>
        <taxon>Rattus</taxon>
    </lineage>
</organism>
<feature type="chain" id="PRO_0000070085" description="Prokineticin receptor 2">
    <location>
        <begin position="1"/>
        <end position="383"/>
    </location>
</feature>
<feature type="topological domain" description="Extracellular" evidence="3">
    <location>
        <begin position="1"/>
        <end position="54"/>
    </location>
</feature>
<feature type="transmembrane region" description="Helical; Name=1" evidence="3">
    <location>
        <begin position="55"/>
        <end position="75"/>
    </location>
</feature>
<feature type="topological domain" description="Cytoplasmic" evidence="3">
    <location>
        <begin position="76"/>
        <end position="89"/>
    </location>
</feature>
<feature type="transmembrane region" description="Helical; Name=2" evidence="3">
    <location>
        <begin position="90"/>
        <end position="110"/>
    </location>
</feature>
<feature type="topological domain" description="Extracellular" evidence="3">
    <location>
        <begin position="111"/>
        <end position="136"/>
    </location>
</feature>
<feature type="transmembrane region" description="Helical; Name=3" evidence="3">
    <location>
        <begin position="137"/>
        <end position="157"/>
    </location>
</feature>
<feature type="topological domain" description="Cytoplasmic" evidence="3">
    <location>
        <begin position="158"/>
        <end position="170"/>
    </location>
</feature>
<feature type="transmembrane region" description="Helical; Name=4" evidence="3">
    <location>
        <begin position="171"/>
        <end position="191"/>
    </location>
</feature>
<feature type="topological domain" description="Extracellular" evidence="3">
    <location>
        <begin position="192"/>
        <end position="222"/>
    </location>
</feature>
<feature type="transmembrane region" description="Helical; Name=5" evidence="3">
    <location>
        <begin position="223"/>
        <end position="243"/>
    </location>
</feature>
<feature type="topological domain" description="Cytoplasmic" evidence="3">
    <location>
        <begin position="244"/>
        <end position="272"/>
    </location>
</feature>
<feature type="transmembrane region" description="Helical; Name=6" evidence="3">
    <location>
        <begin position="273"/>
        <end position="293"/>
    </location>
</feature>
<feature type="topological domain" description="Extracellular" evidence="3">
    <location>
        <begin position="294"/>
        <end position="312"/>
    </location>
</feature>
<feature type="transmembrane region" description="Helical; Name=7" evidence="3">
    <location>
        <begin position="313"/>
        <end position="333"/>
    </location>
</feature>
<feature type="topological domain" description="Cytoplasmic" evidence="3">
    <location>
        <begin position="334"/>
        <end position="383"/>
    </location>
</feature>
<feature type="glycosylation site" description="N-linked (GlcNAc...) asparagine" evidence="3">
    <location>
        <position position="7"/>
    </location>
</feature>
<feature type="glycosylation site" description="N-linked (GlcNAc...) asparagine" evidence="3">
    <location>
        <position position="27"/>
    </location>
</feature>
<feature type="disulfide bond" evidence="4">
    <location>
        <begin position="128"/>
        <end position="207"/>
    </location>
</feature>
<proteinExistence type="evidence at transcript level"/>
<protein>
    <recommendedName>
        <fullName>Prokineticin receptor 2</fullName>
        <shortName>PK-R2</shortName>
    </recommendedName>
    <alternativeName>
        <fullName>G-protein coupled receptor 73-like 1</fullName>
    </alternativeName>
    <alternativeName>
        <fullName>G-protein coupled receptor I5E</fullName>
    </alternativeName>
</protein>
<gene>
    <name type="primary">Prokr2</name>
    <name type="synonym">Gpr73l1</name>
    <name type="synonym">Pkr2</name>
</gene>